<keyword id="KW-0012">Acyltransferase</keyword>
<keyword id="KW-0511">Multifunctional enzyme</keyword>
<keyword id="KW-0521">NADP</keyword>
<keyword id="KW-0560">Oxidoreductase</keyword>
<keyword id="KW-0596">Phosphopantetheine</keyword>
<keyword id="KW-0597">Phosphoprotein</keyword>
<keyword id="KW-0808">Transferase</keyword>
<dbReference type="EC" id="2.3.1.-" evidence="11"/>
<dbReference type="EMBL" id="U68040">
    <property type="protein sequence ID" value="AAB08104.3"/>
    <property type="molecule type" value="Genomic_DNA"/>
</dbReference>
<dbReference type="EMBL" id="KB733517">
    <property type="protein sequence ID" value="ENH98624.1"/>
    <property type="molecule type" value="Genomic_DNA"/>
</dbReference>
<dbReference type="RefSeq" id="XP_014072534.1">
    <property type="nucleotide sequence ID" value="XM_014217059.1"/>
</dbReference>
<dbReference type="SMR" id="N4WHE3"/>
<dbReference type="GeneID" id="25845241"/>
<dbReference type="HOGENOM" id="CLU_000022_31_1_1"/>
<dbReference type="OrthoDB" id="329835at2759"/>
<dbReference type="PHI-base" id="PHI:55"/>
<dbReference type="Proteomes" id="UP000012338">
    <property type="component" value="Unassembled WGS sequence"/>
</dbReference>
<dbReference type="GO" id="GO:0004312">
    <property type="term" value="F:fatty acid synthase activity"/>
    <property type="evidence" value="ECO:0007669"/>
    <property type="project" value="TreeGrafter"/>
</dbReference>
<dbReference type="GO" id="GO:0016491">
    <property type="term" value="F:oxidoreductase activity"/>
    <property type="evidence" value="ECO:0007669"/>
    <property type="project" value="UniProtKB-KW"/>
</dbReference>
<dbReference type="GO" id="GO:0031177">
    <property type="term" value="F:phosphopantetheine binding"/>
    <property type="evidence" value="ECO:0007669"/>
    <property type="project" value="InterPro"/>
</dbReference>
<dbReference type="GO" id="GO:0006633">
    <property type="term" value="P:fatty acid biosynthetic process"/>
    <property type="evidence" value="ECO:0007669"/>
    <property type="project" value="TreeGrafter"/>
</dbReference>
<dbReference type="GO" id="GO:0030639">
    <property type="term" value="P:polyketide biosynthetic process"/>
    <property type="evidence" value="ECO:0007669"/>
    <property type="project" value="UniProtKB-ARBA"/>
</dbReference>
<dbReference type="CDD" id="cd05195">
    <property type="entry name" value="enoyl_red"/>
    <property type="match status" value="1"/>
</dbReference>
<dbReference type="CDD" id="cd00833">
    <property type="entry name" value="PKS"/>
    <property type="match status" value="1"/>
</dbReference>
<dbReference type="FunFam" id="3.40.50.720:FF:000209">
    <property type="entry name" value="Polyketide synthase Pks12"/>
    <property type="match status" value="1"/>
</dbReference>
<dbReference type="Gene3D" id="3.30.70.3290">
    <property type="match status" value="1"/>
</dbReference>
<dbReference type="Gene3D" id="3.40.47.10">
    <property type="match status" value="1"/>
</dbReference>
<dbReference type="Gene3D" id="1.10.1200.10">
    <property type="entry name" value="ACP-like"/>
    <property type="match status" value="1"/>
</dbReference>
<dbReference type="Gene3D" id="3.40.366.10">
    <property type="entry name" value="Malonyl-Coenzyme A Acyl Carrier Protein, domain 2"/>
    <property type="match status" value="1"/>
</dbReference>
<dbReference type="Gene3D" id="3.90.180.10">
    <property type="entry name" value="Medium-chain alcohol dehydrogenases, catalytic domain"/>
    <property type="match status" value="1"/>
</dbReference>
<dbReference type="Gene3D" id="3.40.50.720">
    <property type="entry name" value="NAD(P)-binding Rossmann-like Domain"/>
    <property type="match status" value="1"/>
</dbReference>
<dbReference type="Gene3D" id="3.10.129.110">
    <property type="entry name" value="Polyketide synthase dehydratase"/>
    <property type="match status" value="1"/>
</dbReference>
<dbReference type="Gene3D" id="3.40.50.150">
    <property type="entry name" value="Vaccinia Virus protein VP39"/>
    <property type="match status" value="1"/>
</dbReference>
<dbReference type="InterPro" id="IPR001227">
    <property type="entry name" value="Ac_transferase_dom_sf"/>
</dbReference>
<dbReference type="InterPro" id="IPR036736">
    <property type="entry name" value="ACP-like_sf"/>
</dbReference>
<dbReference type="InterPro" id="IPR014043">
    <property type="entry name" value="Acyl_transferase_dom"/>
</dbReference>
<dbReference type="InterPro" id="IPR016035">
    <property type="entry name" value="Acyl_Trfase/lysoPLipase"/>
</dbReference>
<dbReference type="InterPro" id="IPR013154">
    <property type="entry name" value="ADH-like_N"/>
</dbReference>
<dbReference type="InterPro" id="IPR011032">
    <property type="entry name" value="GroES-like_sf"/>
</dbReference>
<dbReference type="InterPro" id="IPR014031">
    <property type="entry name" value="Ketoacyl_synth_C"/>
</dbReference>
<dbReference type="InterPro" id="IPR014030">
    <property type="entry name" value="Ketoacyl_synth_N"/>
</dbReference>
<dbReference type="InterPro" id="IPR016036">
    <property type="entry name" value="Malonyl_transacylase_ACP-bd"/>
</dbReference>
<dbReference type="InterPro" id="IPR036291">
    <property type="entry name" value="NAD(P)-bd_dom_sf"/>
</dbReference>
<dbReference type="InterPro" id="IPR056501">
    <property type="entry name" value="NAD-bd_HRPKS_sdrA"/>
</dbReference>
<dbReference type="InterPro" id="IPR032821">
    <property type="entry name" value="PKS_assoc"/>
</dbReference>
<dbReference type="InterPro" id="IPR020841">
    <property type="entry name" value="PKS_Beta-ketoAc_synthase_dom"/>
</dbReference>
<dbReference type="InterPro" id="IPR042104">
    <property type="entry name" value="PKS_dehydratase_sf"/>
</dbReference>
<dbReference type="InterPro" id="IPR020807">
    <property type="entry name" value="PKS_DH"/>
</dbReference>
<dbReference type="InterPro" id="IPR049551">
    <property type="entry name" value="PKS_DH_C"/>
</dbReference>
<dbReference type="InterPro" id="IPR049552">
    <property type="entry name" value="PKS_DH_N"/>
</dbReference>
<dbReference type="InterPro" id="IPR020843">
    <property type="entry name" value="PKS_ER"/>
</dbReference>
<dbReference type="InterPro" id="IPR013968">
    <property type="entry name" value="PKS_KR"/>
</dbReference>
<dbReference type="InterPro" id="IPR049900">
    <property type="entry name" value="PKS_mFAS_DH"/>
</dbReference>
<dbReference type="InterPro" id="IPR050091">
    <property type="entry name" value="PKS_NRPS_Biosynth_Enz"/>
</dbReference>
<dbReference type="InterPro" id="IPR020806">
    <property type="entry name" value="PKS_PP-bd"/>
</dbReference>
<dbReference type="InterPro" id="IPR009081">
    <property type="entry name" value="PP-bd_ACP"/>
</dbReference>
<dbReference type="InterPro" id="IPR006162">
    <property type="entry name" value="Ppantetheine_attach_site"/>
</dbReference>
<dbReference type="InterPro" id="IPR029063">
    <property type="entry name" value="SAM-dependent_MTases_sf"/>
</dbReference>
<dbReference type="InterPro" id="IPR016039">
    <property type="entry name" value="Thiolase-like"/>
</dbReference>
<dbReference type="PANTHER" id="PTHR43775:SF29">
    <property type="entry name" value="ASPERFURANONE POLYKETIDE SYNTHASE AFOG-RELATED"/>
    <property type="match status" value="1"/>
</dbReference>
<dbReference type="PANTHER" id="PTHR43775">
    <property type="entry name" value="FATTY ACID SYNTHASE"/>
    <property type="match status" value="1"/>
</dbReference>
<dbReference type="Pfam" id="PF23297">
    <property type="entry name" value="ACP_SdgA_C"/>
    <property type="match status" value="1"/>
</dbReference>
<dbReference type="Pfam" id="PF00698">
    <property type="entry name" value="Acyl_transf_1"/>
    <property type="match status" value="1"/>
</dbReference>
<dbReference type="Pfam" id="PF08240">
    <property type="entry name" value="ADH_N"/>
    <property type="match status" value="1"/>
</dbReference>
<dbReference type="Pfam" id="PF13602">
    <property type="entry name" value="ADH_zinc_N_2"/>
    <property type="match status" value="1"/>
</dbReference>
<dbReference type="Pfam" id="PF16197">
    <property type="entry name" value="KAsynt_C_assoc"/>
    <property type="match status" value="1"/>
</dbReference>
<dbReference type="Pfam" id="PF00109">
    <property type="entry name" value="ketoacyl-synt"/>
    <property type="match status" value="1"/>
</dbReference>
<dbReference type="Pfam" id="PF02801">
    <property type="entry name" value="Ketoacyl-synt_C"/>
    <property type="match status" value="1"/>
</dbReference>
<dbReference type="Pfam" id="PF08659">
    <property type="entry name" value="KR"/>
    <property type="match status" value="1"/>
</dbReference>
<dbReference type="Pfam" id="PF23114">
    <property type="entry name" value="NAD-bd_HRPKS_sdrA"/>
    <property type="match status" value="1"/>
</dbReference>
<dbReference type="Pfam" id="PF21089">
    <property type="entry name" value="PKS_DH_N"/>
    <property type="match status" value="1"/>
</dbReference>
<dbReference type="Pfam" id="PF14765">
    <property type="entry name" value="PS-DH"/>
    <property type="match status" value="1"/>
</dbReference>
<dbReference type="SMART" id="SM00827">
    <property type="entry name" value="PKS_AT"/>
    <property type="match status" value="1"/>
</dbReference>
<dbReference type="SMART" id="SM00826">
    <property type="entry name" value="PKS_DH"/>
    <property type="match status" value="1"/>
</dbReference>
<dbReference type="SMART" id="SM00829">
    <property type="entry name" value="PKS_ER"/>
    <property type="match status" value="1"/>
</dbReference>
<dbReference type="SMART" id="SM00822">
    <property type="entry name" value="PKS_KR"/>
    <property type="match status" value="1"/>
</dbReference>
<dbReference type="SMART" id="SM00825">
    <property type="entry name" value="PKS_KS"/>
    <property type="match status" value="1"/>
</dbReference>
<dbReference type="SMART" id="SM00823">
    <property type="entry name" value="PKS_PP"/>
    <property type="match status" value="1"/>
</dbReference>
<dbReference type="SUPFAM" id="SSF47336">
    <property type="entry name" value="ACP-like"/>
    <property type="match status" value="1"/>
</dbReference>
<dbReference type="SUPFAM" id="SSF52151">
    <property type="entry name" value="FabD/lysophospholipase-like"/>
    <property type="match status" value="1"/>
</dbReference>
<dbReference type="SUPFAM" id="SSF50129">
    <property type="entry name" value="GroES-like"/>
    <property type="match status" value="1"/>
</dbReference>
<dbReference type="SUPFAM" id="SSF51735">
    <property type="entry name" value="NAD(P)-binding Rossmann-fold domains"/>
    <property type="match status" value="2"/>
</dbReference>
<dbReference type="SUPFAM" id="SSF55048">
    <property type="entry name" value="Probable ACP-binding domain of malonyl-CoA ACP transacylase"/>
    <property type="match status" value="1"/>
</dbReference>
<dbReference type="SUPFAM" id="SSF53901">
    <property type="entry name" value="Thiolase-like"/>
    <property type="match status" value="1"/>
</dbReference>
<dbReference type="PROSITE" id="PS50075">
    <property type="entry name" value="CARRIER"/>
    <property type="match status" value="1"/>
</dbReference>
<dbReference type="PROSITE" id="PS52004">
    <property type="entry name" value="KS3_2"/>
    <property type="match status" value="1"/>
</dbReference>
<dbReference type="PROSITE" id="PS00012">
    <property type="entry name" value="PHOSPHOPANTETHEINE"/>
    <property type="match status" value="1"/>
</dbReference>
<dbReference type="PROSITE" id="PS52019">
    <property type="entry name" value="PKS_MFAS_DH"/>
    <property type="match status" value="1"/>
</dbReference>
<sequence>MTVRDSKTGGITPIAVVGMSFRGPGDATNVEKLLNMISEGRESRAEVQAKKWDPEGFYHPDSSRHGTHNVEYGHWFQQDVYNFDAPFFNVSPAEAAALDPQQRMLLECSYEAFENSGTPMSKIVGTDTSVFVSSFATDYTDMLWRDPESVPMYQCTNSGFSRSNLANRISYSFDLKGPSVLVDTACSGGLTALHLACQSLLVGDVRQALAAGSSLILGPEMMVTMSMMKFLSPDGRCYAFDERANGYARGEGVAVLLLKRLEDALADNDTIRAVIRGTGCNQDGKTPGITMPNSVSQEALIRSVYKKAALDPLDTTYVECHGTGTQAGDTTEASALSKVFSPGRRLPLLIGSVKTNIGHLEGASGLAGVVKSILMLEQGVILPNRNFERPNTKIPLEKWNLRVPTTLECWNNVKTRRVSINSFGYGGANVHAILESATDFLRDNSMGTDSTRFASRRSVVVGNVGQTKPAVSLVQDMSSNDRSHEDPTPLLFALSAFDSSAGDAWARSLSIYLSQRQGSDEKTILSSLAYTLSDRRTWHPWKAALSATTIQELITKLEKVRFVNMAPRHNIGFVFTGQGAQWCGMGRELISIFPRFRQSLIACDIALQSFGADFHVIDELEADVESSRINKALYSQPLCTALQIALVDLLVSWGIYAQSVTGHSSGEIAAAYAAGALSLSDAMLVAYARGCATANLAKKGAKGAMAAVSMETQELSHILSALENGKVGIACFNSPTSCTVSGDKSALDELQDVLRQKGVYNRRLIVDVAYHSHHMELIADSYRSAISSIQPLPGSDVKFFSSVTGELLDKNKLGVDYWVSNLVGQVKFAQSLSSLVSSHHGTGTPQIQALIEIGPHAALGGPISQVIDSEPLANPTGYFSALVRKKNAVTTILSLAADLFLSGYPIQLSAVNQNCNSRHTPLVDLPSYSWNHSKAYTAESRISKTYRQRRYPRLDLIGVFDVHSSVLEPRWRQVIRLSELPWLQDHKIQSSILYPVAGYIAMAIEAATQRNQMREMGNDILGYQFRDVAISSALTIPDMPGQVEVFITLRSFSESVRSPSNLWDEFSISSVNDENRWTEHCRGLISVLKSSKLSNLVNGKMQDASTIACQHDLREVFATCCKTEWDVKDMYEHFWETGMQYGPTFANLCDVRCTSNKCIGKVKVPDTAAVMPMKHEAPFIIHPGTLDSIIQTYLPALVQAGHLKSATIPVAIESMFISRNVTRQAGDLLTSYASSTRKDYRYFSTSMSVFADGPSSENQLVITIDDMTLVALDRPNSSEESGEALPLAFNLHWKPDVDMLTEEQLVEMINASTKVKDHIAAKKMKQTAAQLGKEILARVPFEQAQVVGESSRHLWKLLHASLESLSTPDHRGALDEISSLKNVDSTLAQAADRLSNVLTGRVAPSDVASMYDLMEAVRIPELYDNNLPTATYLHLLGHKKPSLRVLTVGPQSGPTSLNLLMLLAELGGGEIPFAVLHHSDAELNIDQTVRSRFPSWADSVGFRDVFNESGASQQNPPIVNETYDIVVAFNVLGSSPGFSKTLSAAAPLLNARGKILLVDNSHKSPMAALVWGPLPSFLSTWVDEKSADSPDVDCAVQSMGYDIYARLCPNVTVIQRAAQVQKAEKTIGLDVLVVTDGEPAGVDLQQLQTLCEDQYAEVHVASLEHARPRPGQACIVLSELSRPVLAAPTAAEWEAVKRITDTCSGIVWVTRGAADNVCSNPQVSLIQGFARTVRAEAGDKPITTLDLDNDKVLSAQAAAAYIAAVFQRMMQGGEDIDVELQERRGILHVARLIEDGDAAKQLQGEATAMELRLDQAGPCRLFAGTPGLLDSLHFTVDDRVQESLETGQIEVQVHATGINFKDVMMAMGQIAVEDLGCECSGVVSAVGDGVVGLRVGDRVACMGPGSFCTQLRVDARLAHRIPHHMELETAAALPITYVTAYHSIHNIAHLRHGETILIHAAAGGLGQALVELSQLVGARVLVTVGSTEKKRLIMQRFRLSEEDILFSRDTSFVHDVMRLTNGRGVDVIMNSLAGESLRQSWTCIAPNGRFVELGQRDITVNSRLDMAPFARNVSFTAYNLAYMLRHDPQAAHEVLAEVLALYDQGKLRGPEPLEKCTFSQLGNAFRKIQTGRHMGKMVAVANPDDMVWYKPPPASRRTLFRPDASYLLVGGVGGLGSATALWMSTRGARHLLLLNRSGADTEAARTTLATLRANGCTATVLACDVADKAQLSSVLAEARSNWPPIRGVIQGAMVLRDSMLANMTLEDYMAVVRPKVQGTWNLQTHLPADLDFFILESSISGIIGNPGQAAYAAANTFLDAFARWRRARCQPATVIDIGAVHGIGYLERNVDVKLSMERQGFAFTDEQLLMRLLEFAISHSSREPHRAQIVTGLGPWHPDTSLPGLNAPLFSRYRMLSCQNSTGSTDVDTLRGILAQSSSFDSAVTIVLSALVDQVVSRTEIPIENVHTTKSLQDYGIDSLVAVELRNWLIKDMDSVVPMLELLGAESLSALAVKIAARSQLISTNNRG</sequence>
<evidence type="ECO:0000255" key="1"/>
<evidence type="ECO:0000255" key="2">
    <source>
        <dbReference type="PROSITE-ProRule" id="PRU00258"/>
    </source>
</evidence>
<evidence type="ECO:0000255" key="3">
    <source>
        <dbReference type="PROSITE-ProRule" id="PRU01348"/>
    </source>
</evidence>
<evidence type="ECO:0000255" key="4">
    <source>
        <dbReference type="PROSITE-ProRule" id="PRU01363"/>
    </source>
</evidence>
<evidence type="ECO:0000269" key="5">
    <source>
    </source>
</evidence>
<evidence type="ECO:0000269" key="6">
    <source>
    </source>
</evidence>
<evidence type="ECO:0000269" key="7">
    <source>
    </source>
</evidence>
<evidence type="ECO:0000269" key="8">
    <source>
    </source>
</evidence>
<evidence type="ECO:0000303" key="9">
    <source>
    </source>
</evidence>
<evidence type="ECO:0000305" key="10"/>
<evidence type="ECO:0000305" key="11">
    <source>
    </source>
</evidence>
<feature type="chain" id="PRO_0000437634" description="Reducing polyketide synthase PKS1">
    <location>
        <begin position="1"/>
        <end position="2528"/>
    </location>
</feature>
<feature type="domain" description="Ketosynthase family 3 (KS3)" evidence="3">
    <location>
        <begin position="11"/>
        <end position="436"/>
    </location>
</feature>
<feature type="domain" description="PKS/mFAS DH" evidence="4">
    <location>
        <begin position="954"/>
        <end position="1278"/>
    </location>
</feature>
<feature type="domain" description="Carrier" evidence="2">
    <location>
        <begin position="2442"/>
        <end position="2519"/>
    </location>
</feature>
<feature type="region of interest" description="Malonyl-CoA:ACP transacylase (MAT)" evidence="1">
    <location>
        <begin position="573"/>
        <end position="868"/>
    </location>
</feature>
<feature type="region of interest" description="N-terminal hotdog fold" evidence="4">
    <location>
        <begin position="954"/>
        <end position="1092"/>
    </location>
</feature>
<feature type="region of interest" description="Dehydratase (DH) domain" evidence="1">
    <location>
        <begin position="956"/>
        <end position="1277"/>
    </location>
</feature>
<feature type="region of interest" description="C-terminal hotdog fold" evidence="4">
    <location>
        <begin position="1122"/>
        <end position="1278"/>
    </location>
</feature>
<feature type="region of interest" description="Enoyl reductase (ER) domain" evidence="1">
    <location>
        <begin position="1827"/>
        <end position="2139"/>
    </location>
</feature>
<feature type="region of interest" description="Ketoreductase (KR) domain" evidence="1">
    <location>
        <begin position="2164"/>
        <end position="2341"/>
    </location>
</feature>
<feature type="active site" description="For beta-ketoacyl synthase activity" evidence="3">
    <location>
        <position position="186"/>
    </location>
</feature>
<feature type="active site" description="For beta-ketoacyl synthase activity" evidence="3">
    <location>
        <position position="321"/>
    </location>
</feature>
<feature type="active site" description="For beta-ketoacyl synthase activity" evidence="3">
    <location>
        <position position="359"/>
    </location>
</feature>
<feature type="active site" description="Proton acceptor; for dehydratase activity" evidence="4">
    <location>
        <position position="986"/>
    </location>
</feature>
<feature type="active site" description="Proton donor; for dehydratase activity" evidence="4">
    <location>
        <position position="1187"/>
    </location>
</feature>
<feature type="modified residue" description="O-(pantetheine 4'-phosphoryl)serine" evidence="2">
    <location>
        <position position="2479"/>
    </location>
</feature>
<proteinExistence type="inferred from homology"/>
<name>PKS1_COCH4</name>
<gene>
    <name evidence="9" type="primary">PKS1</name>
    <name type="ORF">COCC4DRAFT_45906</name>
</gene>
<reference key="1">
    <citation type="journal article" date="1996" name="Plant Cell">
        <title>A polyketide synthase is required for fungal virulence and production of the polyketide T-toxin.</title>
        <authorList>
            <person name="Yang G."/>
            <person name="Rose M.S."/>
            <person name="Turgeon B.G."/>
            <person name="Yoder O.C."/>
        </authorList>
    </citation>
    <scope>NUCLEOTIDE SEQUENCE [GENOMIC DNA]</scope>
    <scope>FUNCTION</scope>
    <scope>DISRUPTION PHENOTYPE</scope>
    <source>
        <strain>C4 / ATCC 48331 / race T</strain>
    </source>
</reference>
<reference key="2">
    <citation type="journal article" date="2012" name="PLoS Pathog.">
        <title>Diverse lifestyles and strategies of plant pathogenesis encoded in the genomes of eighteen Dothideomycetes fungi.</title>
        <authorList>
            <person name="Ohm R.A."/>
            <person name="Feau N."/>
            <person name="Henrissat B."/>
            <person name="Schoch C.L."/>
            <person name="Horwitz B.A."/>
            <person name="Barry K.W."/>
            <person name="Condon B.J."/>
            <person name="Copeland A.C."/>
            <person name="Dhillon B."/>
            <person name="Glaser F."/>
            <person name="Hesse C.N."/>
            <person name="Kosti I."/>
            <person name="LaButti K."/>
            <person name="Lindquist E.A."/>
            <person name="Lucas S."/>
            <person name="Salamov A.A."/>
            <person name="Bradshaw R.E."/>
            <person name="Ciuffetti L."/>
            <person name="Hamelin R.C."/>
            <person name="Kema G.H.J."/>
            <person name="Lawrence C."/>
            <person name="Scott J.A."/>
            <person name="Spatafora J.W."/>
            <person name="Turgeon B.G."/>
            <person name="de Wit P.J.G.M."/>
            <person name="Zhong S."/>
            <person name="Goodwin S.B."/>
            <person name="Grigoriev I.V."/>
        </authorList>
    </citation>
    <scope>NUCLEOTIDE SEQUENCE [LARGE SCALE GENOMIC DNA]</scope>
    <source>
        <strain>C4 / ATCC 48331 / race T</strain>
    </source>
</reference>
<reference key="3">
    <citation type="journal article" date="2013" name="PLoS Genet.">
        <title>Comparative genome structure, secondary metabolite, and effector coding capacity across Cochliobolus pathogens.</title>
        <authorList>
            <person name="Condon B.J."/>
            <person name="Leng Y."/>
            <person name="Wu D."/>
            <person name="Bushley K.E."/>
            <person name="Ohm R.A."/>
            <person name="Otillar R."/>
            <person name="Martin J."/>
            <person name="Schackwitz W."/>
            <person name="Grimwood J."/>
            <person name="MohdZainudin N."/>
            <person name="Xue C."/>
            <person name="Wang R."/>
            <person name="Manning V.A."/>
            <person name="Dhillon B."/>
            <person name="Tu Z.J."/>
            <person name="Steffenson B.J."/>
            <person name="Salamov A."/>
            <person name="Sun H."/>
            <person name="Lowry S."/>
            <person name="LaButti K."/>
            <person name="Han J."/>
            <person name="Copeland A."/>
            <person name="Lindquist E."/>
            <person name="Barry K."/>
            <person name="Schmutz J."/>
            <person name="Baker S.E."/>
            <person name="Ciuffetti L.M."/>
            <person name="Grigoriev I.V."/>
            <person name="Zhong S."/>
            <person name="Turgeon B.G."/>
        </authorList>
    </citation>
    <scope>NUCLEOTIDE SEQUENCE [LARGE SCALE GENOMIC DNA]</scope>
    <source>
        <strain>C4 / ATCC 48331 / race T</strain>
    </source>
</reference>
<reference key="4">
    <citation type="journal article" date="2002" name="Mol. Plant Microbe Interact.">
        <title>A decarboxylase encoded at the Cochliobolus heterostrophus translocation-associated Tox1B locus is required for polyketide (T-toxin) biosynthesis and high virulence on T-cytoplasm maize.</title>
        <authorList>
            <person name="Rose M.S."/>
            <person name="Yun S.-H."/>
            <person name="Asvarak T."/>
            <person name="Lu S.-W."/>
            <person name="Yoder O.C."/>
            <person name="Turgeon B.G."/>
        </authorList>
    </citation>
    <scope>FUNCTION</scope>
    <scope>DISRUPTION PHENOTYPE</scope>
    <source>
        <strain>C4 / ATCC 48331 / race T</strain>
    </source>
</reference>
<reference key="5">
    <citation type="journal article" date="2006" name="Mol. Plant Microbe Interact.">
        <title>Two polyketide synthase-encoding genes are required for biosynthesis of the polyketide virulence factor, T-toxin, by Cochliobolus heterostrophus.</title>
        <authorList>
            <person name="Baker S.E."/>
            <person name="Kroken S."/>
            <person name="Inderbitzin P."/>
            <person name="Asvarak T."/>
            <person name="Li B.Y."/>
            <person name="Shi L."/>
            <person name="Yoder O.C."/>
            <person name="Turgeon B.G."/>
        </authorList>
    </citation>
    <scope>FUNCTION</scope>
</reference>
<reference key="6">
    <citation type="journal article" date="2010" name="Mol. Plant Microbe Interact.">
        <title>Six new genes required for production of T-toxin, a polyketide determinant of high virulence of Cochliobolus heterostrophus to maize.</title>
        <authorList>
            <person name="Inderbitzin P."/>
            <person name="Asvarak T."/>
            <person name="Turgeon B.G."/>
        </authorList>
    </citation>
    <scope>FUNCTION</scope>
    <source>
        <strain>C4 / ATCC 48331 / race T</strain>
    </source>
</reference>
<organism>
    <name type="scientific">Cochliobolus heterostrophus (strain C4 / ATCC 48331 / race T)</name>
    <name type="common">Southern corn leaf blight fungus</name>
    <name type="synonym">Bipolaris maydis</name>
    <dbReference type="NCBI Taxonomy" id="665024"/>
    <lineage>
        <taxon>Eukaryota</taxon>
        <taxon>Fungi</taxon>
        <taxon>Dikarya</taxon>
        <taxon>Ascomycota</taxon>
        <taxon>Pezizomycotina</taxon>
        <taxon>Dothideomycetes</taxon>
        <taxon>Pleosporomycetidae</taxon>
        <taxon>Pleosporales</taxon>
        <taxon>Pleosporineae</taxon>
        <taxon>Pleosporaceae</taxon>
        <taxon>Bipolaris</taxon>
    </lineage>
</organism>
<comment type="function">
    <text evidence="5 6 7 8">Reducing polyketide synthase (PKS); part of the Tox1A locus, one of the 2 loci that mediate the biosynthesis of T-toxin, a family of linear polyketides 37 to 45 carbons in length, of which the major component is 41 carbons, and which leads to high virulence to maize (PubMed:20192833, PubMed:8953776). One of the PKSs (PKS1 or PKS2) could synthesize a precursor, used subsequently by the other PKS as starter unit, to add additional carbons (PubMed:16529376). Variability in the length of the final carbon backbone C35-47 could be achieved by varying the number of condensation cycles, or use of different starter or extender units or might be due to decarboxylation of the penultimate product, catalyzed by DEC1 (PubMed:12236595). Additional proteins are required for the biosynthesis of T-toxin, including oxidoreductases RED1, RED2, RED3, LAM1 and OXI1, as well as esterase TOX9 (PubMed:20192833).</text>
</comment>
<comment type="pathway">
    <text evidence="8">Mycotoxin biosynthesis.</text>
</comment>
<comment type="disruption phenotype">
    <text evidence="5 8">Leads to the loss of T-Toxin production, resulting in low virulence for maize (PubMed:12236595, PubMed:8953776).</text>
</comment>
<accession>N4WHE3</accession>
<accession>Q92217</accession>
<protein>
    <recommendedName>
        <fullName evidence="9">Reducing polyketide synthase PKS1</fullName>
        <ecNumber evidence="11">2.3.1.-</ecNumber>
    </recommendedName>
    <alternativeName>
        <fullName evidence="10">T-toxin biosynthesis protein PKS1</fullName>
    </alternativeName>
</protein>